<keyword id="KW-0053">Apoptosis</keyword>
<keyword id="KW-1077">G0/G1 host cell cycle checkpoint dysregulation by virus</keyword>
<keyword id="KW-1045">Host mitochondrion</keyword>
<keyword id="KW-1048">Host nucleus</keyword>
<keyword id="KW-0945">Host-virus interaction</keyword>
<keyword id="KW-1119">Modulation of host cell apoptosis by virus</keyword>
<keyword id="KW-1121">Modulation of host cell cycle by virus</keyword>
<keyword id="KW-1185">Reference proteome</keyword>
<keyword id="KW-0694">RNA-binding</keyword>
<comment type="function">
    <text evidence="1">Induces host cell G0/G1 arrest and apoptosis.</text>
</comment>
<comment type="subunit">
    <text evidence="1">Interacts with host RUNX1 isoform b.</text>
</comment>
<comment type="subcellular location">
    <subcellularLocation>
        <location evidence="1">Host nucleus</location>
        <location evidence="1">Host nucleolus</location>
    </subcellularLocation>
    <subcellularLocation>
        <location evidence="1">Host mitochondrion</location>
    </subcellularLocation>
</comment>
<evidence type="ECO:0000250" key="1">
    <source>
        <dbReference type="UniProtKB" id="P59633"/>
    </source>
</evidence>
<organismHost>
    <name type="scientific">Pipistrellus abramus</name>
    <name type="common">Japanese pipistrelle</name>
    <name type="synonym">Pipistrellus javanicus abramus</name>
    <dbReference type="NCBI Taxonomy" id="105295"/>
</organismHost>
<reference key="1">
    <citation type="journal article" date="2007" name="J. Virol.">
        <title>Comparative analysis of twelve genomes of three novel group 2c and group 2d coronaviruses reveals unique group and subgroup features.</title>
        <authorList>
            <person name="Woo P.C.Y."/>
            <person name="Wang M."/>
            <person name="Lau S.K.P."/>
            <person name="Xu H.F."/>
            <person name="Poon R.W.S."/>
            <person name="Guo R."/>
            <person name="Wong B.H.L."/>
            <person name="Gao K."/>
            <person name="Tsoi H.-W."/>
            <person name="Huang Y."/>
            <person name="Li K.S.M."/>
            <person name="Lam C.S.F."/>
            <person name="Chan K.-H."/>
            <person name="Zheng B.-J."/>
            <person name="Yuen K.-Y."/>
        </authorList>
    </citation>
    <scope>NUCLEOTIDE SEQUENCE [GENOMIC RNA]</scope>
    <source>
        <strain>Isolate HKU5-1</strain>
    </source>
</reference>
<feature type="chain" id="PRO_0000290266" description="Non-structural protein 3b">
    <location>
        <begin position="1"/>
        <end position="119"/>
    </location>
</feature>
<feature type="domain" description="DRBM">
    <location>
        <begin position="3"/>
        <end position="79"/>
    </location>
</feature>
<accession>A3EXD2</accession>
<organism>
    <name type="scientific">Bat coronavirus HKU5</name>
    <name type="common">BtCoV</name>
    <name type="synonym">BtCoV/HKU5/2004</name>
    <dbReference type="NCBI Taxonomy" id="694008"/>
    <lineage>
        <taxon>Viruses</taxon>
        <taxon>Riboviria</taxon>
        <taxon>Orthornavirae</taxon>
        <taxon>Pisuviricota</taxon>
        <taxon>Pisoniviricetes</taxon>
        <taxon>Nidovirales</taxon>
        <taxon>Cornidovirineae</taxon>
        <taxon>Coronaviridae</taxon>
        <taxon>Orthocoronavirinae</taxon>
        <taxon>Betacoronavirus</taxon>
        <taxon>Merbecovirus</taxon>
    </lineage>
</organism>
<gene>
    <name type="ORF">3b</name>
</gene>
<proteinExistence type="inferred from homology"/>
<name>NS3B_BCHK5</name>
<sequence>MDYVSLLNQVWQKQVNSSQEGTLAPVRPTYAYRPVQGNLQCPIKWRCIYTFAGYTGTATEPTKVLAKQEAARKVCLRLQEYGRLDGFGLRLRYSTAFEHNRYDASKSYFYTQTSSSSHE</sequence>
<protein>
    <recommendedName>
        <fullName>Non-structural protein 3b</fullName>
        <shortName>ns3b</shortName>
    </recommendedName>
    <alternativeName>
        <fullName>Accessory protein 3b</fullName>
    </alternativeName>
</protein>
<dbReference type="EMBL" id="EF065509">
    <property type="protein sequence ID" value="ABN10877.1"/>
    <property type="molecule type" value="Genomic_RNA"/>
</dbReference>
<dbReference type="SMR" id="A3EXD2"/>
<dbReference type="KEGG" id="vg:4836005"/>
<dbReference type="OrthoDB" id="27162at10239"/>
<dbReference type="Proteomes" id="UP000007451">
    <property type="component" value="Segment"/>
</dbReference>
<dbReference type="GO" id="GO:0033650">
    <property type="term" value="C:host cell mitochondrion"/>
    <property type="evidence" value="ECO:0007669"/>
    <property type="project" value="UniProtKB-SubCell"/>
</dbReference>
<dbReference type="GO" id="GO:0044196">
    <property type="term" value="C:host cell nucleolus"/>
    <property type="evidence" value="ECO:0007669"/>
    <property type="project" value="UniProtKB-SubCell"/>
</dbReference>
<dbReference type="GO" id="GO:0003723">
    <property type="term" value="F:RNA binding"/>
    <property type="evidence" value="ECO:0007669"/>
    <property type="project" value="UniProtKB-KW"/>
</dbReference>
<dbReference type="GO" id="GO:0016891">
    <property type="term" value="F:RNA endonuclease activity, producing 5'-phosphomonoesters"/>
    <property type="evidence" value="ECO:0007669"/>
    <property type="project" value="InterPro"/>
</dbReference>
<dbReference type="GO" id="GO:0052150">
    <property type="term" value="P:symbiont-mediated perturbation of host apoptosis"/>
    <property type="evidence" value="ECO:0007669"/>
    <property type="project" value="UniProtKB-KW"/>
</dbReference>
<dbReference type="GO" id="GO:0039646">
    <property type="term" value="P:symbiont-mediated perturbation of host cell cycle G0/G1 transition checkpoint"/>
    <property type="evidence" value="ECO:0007669"/>
    <property type="project" value="UniProtKB-KW"/>
</dbReference>
<dbReference type="GO" id="GO:0044071">
    <property type="term" value="P:symbiont-mediated perturbation of host cell cycle progression"/>
    <property type="evidence" value="ECO:0007669"/>
    <property type="project" value="UniProtKB-KW"/>
</dbReference>
<dbReference type="CDD" id="cd00048">
    <property type="entry name" value="DSRM_SF"/>
    <property type="match status" value="1"/>
</dbReference>
<dbReference type="Gene3D" id="3.30.160.20">
    <property type="match status" value="1"/>
</dbReference>
<dbReference type="InterPro" id="IPR005034">
    <property type="entry name" value="Dicer_dimerisation_dom"/>
</dbReference>
<dbReference type="Pfam" id="PF03368">
    <property type="entry name" value="Dicer_dimer"/>
    <property type="match status" value="1"/>
</dbReference>
<dbReference type="SUPFAM" id="SSF54768">
    <property type="entry name" value="dsRNA-binding domain-like"/>
    <property type="match status" value="1"/>
</dbReference>